<name>TATD_SHIF8</name>
<feature type="chain" id="PRO_0000412753" description="3'-5' ssDNA/RNA exonuclease TatD">
    <location>
        <begin position="1"/>
        <end position="260"/>
    </location>
</feature>
<feature type="binding site" evidence="1">
    <location>
        <position position="91"/>
    </location>
    <ligand>
        <name>a divalent metal cation</name>
        <dbReference type="ChEBI" id="CHEBI:60240"/>
    </ligand>
</feature>
<feature type="binding site" evidence="1">
    <location>
        <position position="127"/>
    </location>
    <ligand>
        <name>a divalent metal cation</name>
        <dbReference type="ChEBI" id="CHEBI:60240"/>
    </ligand>
</feature>
<feature type="binding site" evidence="1">
    <location>
        <position position="152"/>
    </location>
    <ligand>
        <name>a divalent metal cation</name>
        <dbReference type="ChEBI" id="CHEBI:60240"/>
    </ligand>
</feature>
<dbReference type="EC" id="3.1.11.-" evidence="1"/>
<dbReference type="EC" id="3.1.13.-" evidence="1"/>
<dbReference type="EMBL" id="CP000266">
    <property type="protein sequence ID" value="ABF05684.1"/>
    <property type="molecule type" value="Genomic_DNA"/>
</dbReference>
<dbReference type="RefSeq" id="WP_001299486.1">
    <property type="nucleotide sequence ID" value="NC_008258.1"/>
</dbReference>
<dbReference type="SMR" id="Q0SZ31"/>
<dbReference type="GeneID" id="75204833"/>
<dbReference type="KEGG" id="sfv:SFV_3659"/>
<dbReference type="HOGENOM" id="CLU_031506_1_2_6"/>
<dbReference type="Proteomes" id="UP000000659">
    <property type="component" value="Chromosome"/>
</dbReference>
<dbReference type="GO" id="GO:0005737">
    <property type="term" value="C:cytoplasm"/>
    <property type="evidence" value="ECO:0007669"/>
    <property type="project" value="UniProtKB-SubCell"/>
</dbReference>
<dbReference type="GO" id="GO:0000175">
    <property type="term" value="F:3'-5'-RNA exonuclease activity"/>
    <property type="evidence" value="ECO:0007669"/>
    <property type="project" value="UniProtKB-UniRule"/>
</dbReference>
<dbReference type="GO" id="GO:0000287">
    <property type="term" value="F:magnesium ion binding"/>
    <property type="evidence" value="ECO:0007669"/>
    <property type="project" value="UniProtKB-UniRule"/>
</dbReference>
<dbReference type="GO" id="GO:0008310">
    <property type="term" value="F:single-stranded DNA 3'-5' DNA exonuclease activity"/>
    <property type="evidence" value="ECO:0007669"/>
    <property type="project" value="UniProtKB-UniRule"/>
</dbReference>
<dbReference type="CDD" id="cd01310">
    <property type="entry name" value="TatD_DNAse"/>
    <property type="match status" value="1"/>
</dbReference>
<dbReference type="FunFam" id="3.20.20.140:FF:000018">
    <property type="entry name" value="3'-5' ssDNA/RNA exonuclease TatD"/>
    <property type="match status" value="1"/>
</dbReference>
<dbReference type="Gene3D" id="3.20.20.140">
    <property type="entry name" value="Metal-dependent hydrolases"/>
    <property type="match status" value="1"/>
</dbReference>
<dbReference type="HAMAP" id="MF_00901">
    <property type="entry name" value="TatD_exonuclease"/>
    <property type="match status" value="1"/>
</dbReference>
<dbReference type="InterPro" id="IPR018228">
    <property type="entry name" value="DNase_TatD-rel_CS"/>
</dbReference>
<dbReference type="InterPro" id="IPR024918">
    <property type="entry name" value="Exonuc_TatD"/>
</dbReference>
<dbReference type="InterPro" id="IPR032466">
    <property type="entry name" value="Metal_Hydrolase"/>
</dbReference>
<dbReference type="InterPro" id="IPR001130">
    <property type="entry name" value="TatD-like"/>
</dbReference>
<dbReference type="InterPro" id="IPR050891">
    <property type="entry name" value="TatD-type_Hydrolase"/>
</dbReference>
<dbReference type="NCBIfam" id="NF007745">
    <property type="entry name" value="PRK10425.1"/>
    <property type="match status" value="1"/>
</dbReference>
<dbReference type="PANTHER" id="PTHR10060:SF15">
    <property type="entry name" value="DEOXYRIBONUCLEASE TATDN1"/>
    <property type="match status" value="1"/>
</dbReference>
<dbReference type="PANTHER" id="PTHR10060">
    <property type="entry name" value="TATD FAMILY DEOXYRIBONUCLEASE"/>
    <property type="match status" value="1"/>
</dbReference>
<dbReference type="Pfam" id="PF01026">
    <property type="entry name" value="TatD_DNase"/>
    <property type="match status" value="1"/>
</dbReference>
<dbReference type="PIRSF" id="PIRSF005902">
    <property type="entry name" value="DNase_TatD"/>
    <property type="match status" value="1"/>
</dbReference>
<dbReference type="SUPFAM" id="SSF51556">
    <property type="entry name" value="Metallo-dependent hydrolases"/>
    <property type="match status" value="1"/>
</dbReference>
<dbReference type="PROSITE" id="PS01090">
    <property type="entry name" value="TATD_2"/>
    <property type="match status" value="1"/>
</dbReference>
<dbReference type="PROSITE" id="PS01091">
    <property type="entry name" value="TATD_3"/>
    <property type="match status" value="1"/>
</dbReference>
<protein>
    <recommendedName>
        <fullName evidence="1">3'-5' ssDNA/RNA exonuclease TatD</fullName>
        <ecNumber evidence="1">3.1.11.-</ecNumber>
        <ecNumber evidence="1">3.1.13.-</ecNumber>
    </recommendedName>
    <alternativeName>
        <fullName evidence="1">DNase TatD</fullName>
    </alternativeName>
</protein>
<organism>
    <name type="scientific">Shigella flexneri serotype 5b (strain 8401)</name>
    <dbReference type="NCBI Taxonomy" id="373384"/>
    <lineage>
        <taxon>Bacteria</taxon>
        <taxon>Pseudomonadati</taxon>
        <taxon>Pseudomonadota</taxon>
        <taxon>Gammaproteobacteria</taxon>
        <taxon>Enterobacterales</taxon>
        <taxon>Enterobacteriaceae</taxon>
        <taxon>Shigella</taxon>
    </lineage>
</organism>
<sequence>MFDIGVNLTSSQFAKDRDDVVARAFDAGVNGLLITGTNLRESQQAQKLARQYSSCWSTAGVHPHDSSQWQAATEEAIIELAAQPEVVAIGECGLDFNRNFSTPEEQERAFVAQLRIAAELNMPVFMHCRDAHERFMTLLEPWLDKLPGAVLHCFTGTREEMQACVARGIYIGITGWVCDERRGLELRELLPLIPAEKLLIETDAPYLLPRDLTPKPSSRRNEPAHLPHILQRIAHWRGEDAAWLAATTDANVKTLFGIAF</sequence>
<reference key="1">
    <citation type="journal article" date="2006" name="BMC Genomics">
        <title>Complete genome sequence of Shigella flexneri 5b and comparison with Shigella flexneri 2a.</title>
        <authorList>
            <person name="Nie H."/>
            <person name="Yang F."/>
            <person name="Zhang X."/>
            <person name="Yang J."/>
            <person name="Chen L."/>
            <person name="Wang J."/>
            <person name="Xiong Z."/>
            <person name="Peng J."/>
            <person name="Sun L."/>
            <person name="Dong J."/>
            <person name="Xue Y."/>
            <person name="Xu X."/>
            <person name="Chen S."/>
            <person name="Yao Z."/>
            <person name="Shen Y."/>
            <person name="Jin Q."/>
        </authorList>
    </citation>
    <scope>NUCLEOTIDE SEQUENCE [LARGE SCALE GENOMIC DNA]</scope>
    <source>
        <strain>8401</strain>
    </source>
</reference>
<proteinExistence type="inferred from homology"/>
<accession>Q0SZ31</accession>
<gene>
    <name evidence="1" type="primary">tatD</name>
    <name type="ordered locus">SFV_3659</name>
</gene>
<keyword id="KW-0963">Cytoplasm</keyword>
<keyword id="KW-0269">Exonuclease</keyword>
<keyword id="KW-0378">Hydrolase</keyword>
<keyword id="KW-0460">Magnesium</keyword>
<keyword id="KW-0479">Metal-binding</keyword>
<keyword id="KW-0540">Nuclease</keyword>
<evidence type="ECO:0000255" key="1">
    <source>
        <dbReference type="HAMAP-Rule" id="MF_00901"/>
    </source>
</evidence>
<comment type="function">
    <text evidence="1">3'-5' exonuclease that prefers single-stranded DNA and RNA. May play a role in the H(2)O(2)-induced DNA damage repair.</text>
</comment>
<comment type="cofactor">
    <cofactor evidence="1">
        <name>Mg(2+)</name>
        <dbReference type="ChEBI" id="CHEBI:18420"/>
    </cofactor>
</comment>
<comment type="subunit">
    <text evidence="1">Monomer.</text>
</comment>
<comment type="subcellular location">
    <subcellularLocation>
        <location evidence="1">Cytoplasm</location>
    </subcellularLocation>
</comment>
<comment type="similarity">
    <text evidence="1">Belongs to the metallo-dependent hydrolases superfamily. TatD-type hydrolase family. TatD subfamily.</text>
</comment>